<protein>
    <recommendedName>
        <fullName evidence="1">PqqA binding protein</fullName>
    </recommendedName>
    <alternativeName>
        <fullName evidence="1">Coenzyme PQQ synthesis protein D</fullName>
    </alternativeName>
    <alternativeName>
        <fullName evidence="1">Pyrroloquinoline quinone biosynthesis protein D</fullName>
    </alternativeName>
</protein>
<proteinExistence type="inferred from homology"/>
<dbReference type="EMBL" id="CP001172">
    <property type="protein sequence ID" value="ACJ57115.1"/>
    <property type="molecule type" value="Genomic_DNA"/>
</dbReference>
<dbReference type="RefSeq" id="WP_001031363.1">
    <property type="nucleotide sequence ID" value="NZ_CP001172.1"/>
</dbReference>
<dbReference type="SMR" id="B7H2Y1"/>
<dbReference type="HOGENOM" id="CLU_163864_2_1_6"/>
<dbReference type="UniPathway" id="UPA00539"/>
<dbReference type="Proteomes" id="UP000006924">
    <property type="component" value="Chromosome"/>
</dbReference>
<dbReference type="GO" id="GO:0048038">
    <property type="term" value="F:quinone binding"/>
    <property type="evidence" value="ECO:0007669"/>
    <property type="project" value="InterPro"/>
</dbReference>
<dbReference type="GO" id="GO:0018189">
    <property type="term" value="P:pyrroloquinoline quinone biosynthetic process"/>
    <property type="evidence" value="ECO:0007669"/>
    <property type="project" value="UniProtKB-UniRule"/>
</dbReference>
<dbReference type="Gene3D" id="1.10.10.1150">
    <property type="entry name" value="Coenzyme PQQ synthesis protein D (PqqD)"/>
    <property type="match status" value="1"/>
</dbReference>
<dbReference type="HAMAP" id="MF_00655">
    <property type="entry name" value="PQQ_syn_PqqD"/>
    <property type="match status" value="1"/>
</dbReference>
<dbReference type="InterPro" id="IPR008792">
    <property type="entry name" value="PQQD"/>
</dbReference>
<dbReference type="InterPro" id="IPR022479">
    <property type="entry name" value="PqqD_bac"/>
</dbReference>
<dbReference type="InterPro" id="IPR041881">
    <property type="entry name" value="PqqD_sf"/>
</dbReference>
<dbReference type="NCBIfam" id="TIGR03859">
    <property type="entry name" value="PQQ_PqqD"/>
    <property type="match status" value="1"/>
</dbReference>
<dbReference type="NCBIfam" id="NF002535">
    <property type="entry name" value="PRK02079.1"/>
    <property type="match status" value="1"/>
</dbReference>
<dbReference type="Pfam" id="PF05402">
    <property type="entry name" value="PqqD"/>
    <property type="match status" value="1"/>
</dbReference>
<feature type="chain" id="PRO_1000131183" description="PqqA binding protein">
    <location>
        <begin position="1"/>
        <end position="94"/>
    </location>
</feature>
<comment type="function">
    <text evidence="1">Functions as a PqqA binding protein and presents PqqA to PqqE, in the pyrroloquinoline quinone (PQQ) biosynthetic pathway.</text>
</comment>
<comment type="pathway">
    <text evidence="1">Cofactor biosynthesis; pyrroloquinoline quinone biosynthesis.</text>
</comment>
<comment type="subunit">
    <text evidence="1">Monomer. Interacts with PqqE.</text>
</comment>
<comment type="similarity">
    <text evidence="1">Belongs to the PqqD family.</text>
</comment>
<gene>
    <name evidence="1" type="primary">pqqD</name>
    <name type="ordered locus">ABBFA_001732</name>
</gene>
<organism>
    <name type="scientific">Acinetobacter baumannii (strain AB307-0294)</name>
    <dbReference type="NCBI Taxonomy" id="557600"/>
    <lineage>
        <taxon>Bacteria</taxon>
        <taxon>Pseudomonadati</taxon>
        <taxon>Pseudomonadota</taxon>
        <taxon>Gammaproteobacteria</taxon>
        <taxon>Moraxellales</taxon>
        <taxon>Moraxellaceae</taxon>
        <taxon>Acinetobacter</taxon>
        <taxon>Acinetobacter calcoaceticus/baumannii complex</taxon>
    </lineage>
</organism>
<accession>B7H2Y1</accession>
<name>PQQD_ACIB3</name>
<keyword id="KW-0884">PQQ biosynthesis</keyword>
<reference key="1">
    <citation type="journal article" date="2008" name="J. Bacteriol.">
        <title>Comparative genome sequence analysis of multidrug-resistant Acinetobacter baumannii.</title>
        <authorList>
            <person name="Adams M.D."/>
            <person name="Goglin K."/>
            <person name="Molyneaux N."/>
            <person name="Hujer K.M."/>
            <person name="Lavender H."/>
            <person name="Jamison J.J."/>
            <person name="MacDonald I.J."/>
            <person name="Martin K.M."/>
            <person name="Russo T."/>
            <person name="Campagnari A.A."/>
            <person name="Hujer A.M."/>
            <person name="Bonomo R.A."/>
            <person name="Gill S.R."/>
        </authorList>
    </citation>
    <scope>NUCLEOTIDE SEQUENCE [LARGE SCALE GENOMIC DNA]</scope>
    <source>
        <strain>AB307-0294</strain>
    </source>
</reference>
<sequence>MNKEQFDVNLVPTWRQGYRFQFEPAQNGFVILYPEGMIKLNESAGAIGQYIDGTNNVSAIIAQLKQQFGDIPEIDNDVIDYMLVAQQQHWIDLV</sequence>
<evidence type="ECO:0000255" key="1">
    <source>
        <dbReference type="HAMAP-Rule" id="MF_00655"/>
    </source>
</evidence>